<evidence type="ECO:0000250" key="1">
    <source>
        <dbReference type="UniProtKB" id="Q8BH53"/>
    </source>
</evidence>
<evidence type="ECO:0000256" key="2">
    <source>
        <dbReference type="SAM" id="MobiDB-lite"/>
    </source>
</evidence>
<evidence type="ECO:0000269" key="3">
    <source>
    </source>
</evidence>
<evidence type="ECO:0000269" key="4">
    <source>
    </source>
</evidence>
<evidence type="ECO:0000269" key="5">
    <source>
    </source>
</evidence>
<evidence type="ECO:0000303" key="6">
    <source>
    </source>
</evidence>
<evidence type="ECO:0000303" key="7">
    <source>
    </source>
</evidence>
<evidence type="ECO:0000303" key="8">
    <source ref="1"/>
</evidence>
<evidence type="ECO:0000305" key="9"/>
<evidence type="ECO:0000312" key="10">
    <source>
        <dbReference type="HGNC" id="HGNC:26107"/>
    </source>
</evidence>
<name>CFA69_HUMAN</name>
<gene>
    <name evidence="10" type="primary">CFAP69</name>
    <name evidence="10" type="synonym">C7orf63</name>
</gene>
<keyword id="KW-0025">Alternative splicing</keyword>
<keyword id="KW-0966">Cell projection</keyword>
<keyword id="KW-0969">Cilium</keyword>
<keyword id="KW-0221">Differentiation</keyword>
<keyword id="KW-0282">Flagellum</keyword>
<keyword id="KW-0552">Olfaction</keyword>
<keyword id="KW-1267">Proteomics identification</keyword>
<keyword id="KW-1185">Reference proteome</keyword>
<keyword id="KW-0716">Sensory transduction</keyword>
<keyword id="KW-0744">Spermatogenesis</keyword>
<proteinExistence type="evidence at protein level"/>
<accession>A5D8W1</accession>
<accession>A3KMP9</accession>
<accession>B4DYW6</accession>
<accession>B4DZP7</accession>
<accession>B9EIM7</accession>
<accession>Q6V705</accession>
<accession>Q8IY89</accession>
<accession>Q9H7C2</accession>
<feature type="chain" id="PRO_0000320596" description="Cilia- and flagella-associated protein 69" evidence="9">
    <location>
        <begin position="1"/>
        <end position="941"/>
    </location>
</feature>
<feature type="region of interest" description="Disordered" evidence="2">
    <location>
        <begin position="1"/>
        <end position="26"/>
    </location>
</feature>
<feature type="compositionally biased region" description="Low complexity" evidence="2">
    <location>
        <begin position="1"/>
        <end position="14"/>
    </location>
</feature>
<feature type="compositionally biased region" description="Polar residues" evidence="2">
    <location>
        <begin position="16"/>
        <end position="26"/>
    </location>
</feature>
<feature type="splice variant" id="VSP_031673" description="In isoform 4." evidence="8">
    <location>
        <begin position="118"/>
        <end position="119"/>
    </location>
</feature>
<feature type="splice variant" id="VSP_036548" description="In isoform 5." evidence="6">
    <location>
        <begin position="161"/>
        <end position="178"/>
    </location>
</feature>
<feature type="splice variant" id="VSP_031674" description="In isoform 3 and isoform 4." evidence="7 8">
    <original>EV</original>
    <variation>GL</variation>
    <location>
        <begin position="228"/>
        <end position="229"/>
    </location>
</feature>
<feature type="splice variant" id="VSP_031675" description="In isoform 3 and isoform 4." evidence="7 8">
    <location>
        <begin position="230"/>
        <end position="941"/>
    </location>
</feature>
<feature type="splice variant" id="VSP_031676" description="In isoform 2." evidence="6">
    <location>
        <begin position="685"/>
        <end position="730"/>
    </location>
</feature>
<feature type="sequence variant" id="VAR_039219" description="In dbSNP:rs17862129.">
    <original>S</original>
    <variation>R</variation>
    <location>
        <position position="22"/>
    </location>
</feature>
<feature type="sequence variant" id="VAR_081046" description="In SPGF24." evidence="5">
    <location>
        <begin position="255"/>
        <end position="941"/>
    </location>
</feature>
<feature type="sequence variant" id="VAR_039220" description="In dbSNP:rs17866223.">
    <original>R</original>
    <variation>C</variation>
    <location>
        <position position="306"/>
    </location>
</feature>
<feature type="sequence variant" id="VAR_039221" description="In dbSNP:rs17865959.">
    <original>P</original>
    <variation>L</variation>
    <location>
        <position position="459"/>
    </location>
</feature>
<feature type="sequence variant" id="VAR_039222" description="In dbSNP:rs1029365." evidence="3 4">
    <original>V</original>
    <variation>M</variation>
    <location>
        <position position="490"/>
    </location>
</feature>
<feature type="sequence variant" id="VAR_039223" description="In dbSNP:rs1134956." evidence="3 4">
    <original>T</original>
    <variation>M</variation>
    <location>
        <position position="885"/>
    </location>
</feature>
<feature type="sequence conflict" description="In Ref. 2; BAG64159." evidence="9" ref="2">
    <original>I</original>
    <variation>V</variation>
    <location>
        <position position="101"/>
    </location>
</feature>
<feature type="sequence conflict" description="In Ref. 1; AAQ56720." evidence="9" ref="1">
    <original>K</original>
    <variation>R</variation>
    <location>
        <position position="125"/>
    </location>
</feature>
<feature type="sequence conflict" description="In Ref. 2; BAB14972." evidence="9" ref="2">
    <original>Q</original>
    <variation>H</variation>
    <location>
        <position position="420"/>
    </location>
</feature>
<feature type="sequence conflict" description="In Ref. 2; BAB14972/BAG63878/BAG64159 and 4; AAI32772/AAI41835/AAI42656." evidence="9" ref="2 4">
    <original>S</original>
    <variation>R</variation>
    <location>
        <position position="854"/>
    </location>
</feature>
<comment type="function">
    <text evidence="1 5">Cilium- and flagellum-associated protein (PubMed:29606301). In the olfactory epithelium, regulates the speed of activation and termination of the odor response and thus contributes to the robustness of olfactory transduction pathways (By similarity). Required for sperm flagellum assembly and stability (PubMed:29606301).</text>
</comment>
<comment type="subcellular location">
    <subcellularLocation>
        <location evidence="1">Cell projection</location>
        <location evidence="1">Cilium</location>
    </subcellularLocation>
    <subcellularLocation>
        <location evidence="5">Cell projection</location>
        <location evidence="5">Cilium</location>
        <location evidence="5">Flagellum</location>
    </subcellularLocation>
    <text evidence="5">Localizes to the midpiece of the sperm flagellum.</text>
</comment>
<comment type="alternative products">
    <event type="alternative splicing"/>
    <isoform>
        <id>A5D8W1-1</id>
        <name>1</name>
        <sequence type="displayed"/>
    </isoform>
    <isoform>
        <id>A5D8W1-2</id>
        <name>2</name>
        <sequence type="described" ref="VSP_031676"/>
    </isoform>
    <isoform>
        <id>A5D8W1-3</id>
        <name>3</name>
        <sequence type="described" ref="VSP_031674 VSP_031675"/>
    </isoform>
    <isoform>
        <id>A5D8W1-4</id>
        <name>4</name>
        <sequence type="described" ref="VSP_031673 VSP_031674 VSP_031675"/>
    </isoform>
    <isoform>
        <id>A5D8W1-5</id>
        <name>5</name>
        <sequence type="described" ref="VSP_036548"/>
    </isoform>
</comment>
<comment type="tissue specificity">
    <text evidence="5">Highly expressed in the testis, specifically in sperm (at protein level) (PubMed:29606301). Expressed in the brain, kidney, liver, lung, and intestine (PubMed:29606301).</text>
</comment>
<comment type="disease" evidence="5">
    <disease id="DI-05256">
        <name>Spermatogenic failure 24</name>
        <acronym>SPGF24</acronym>
        <description>An autosomal recessive infertility disorder caused by spermatogenesis defects that result in multiple morphologic abnormalities of the flagella, including absent, short, coiled, bent, and irregular-caliber flagella. Malformations of the sperm head have also been observed. In addition, patients exhibit very low sperm concentrations and total sperm counts per ejaculate.</description>
        <dbReference type="MIM" id="617959"/>
    </disease>
    <text>The disease is caused by variants affecting the gene represented in this entry.</text>
</comment>
<comment type="miscellaneous">
    <molecule>Isoform 2</molecule>
    <text evidence="9">Incomplete sequence.</text>
</comment>
<comment type="sequence caution" evidence="9">
    <conflict type="erroneous initiation">
        <sequence resource="EMBL-CDS" id="BAB14972"/>
    </conflict>
</comment>
<reference key="1">
    <citation type="submission" date="2003-07" db="EMBL/GenBank/DDBJ databases">
        <authorList>
            <person name="Zhou G."/>
            <person name="Zhong G."/>
            <person name="Li H."/>
            <person name="Ke R."/>
            <person name="Shen C."/>
            <person name="Yu R."/>
            <person name="Lin L."/>
            <person name="Yang S."/>
        </authorList>
    </citation>
    <scope>NUCLEOTIDE SEQUENCE [LARGE SCALE MRNA] (ISOFORM 4)</scope>
</reference>
<reference key="2">
    <citation type="journal article" date="2004" name="Nat. Genet.">
        <title>Complete sequencing and characterization of 21,243 full-length human cDNAs.</title>
        <authorList>
            <person name="Ota T."/>
            <person name="Suzuki Y."/>
            <person name="Nishikawa T."/>
            <person name="Otsuki T."/>
            <person name="Sugiyama T."/>
            <person name="Irie R."/>
            <person name="Wakamatsu A."/>
            <person name="Hayashi K."/>
            <person name="Sato H."/>
            <person name="Nagai K."/>
            <person name="Kimura K."/>
            <person name="Makita H."/>
            <person name="Sekine M."/>
            <person name="Obayashi M."/>
            <person name="Nishi T."/>
            <person name="Shibahara T."/>
            <person name="Tanaka T."/>
            <person name="Ishii S."/>
            <person name="Yamamoto J."/>
            <person name="Saito K."/>
            <person name="Kawai Y."/>
            <person name="Isono Y."/>
            <person name="Nakamura Y."/>
            <person name="Nagahari K."/>
            <person name="Murakami K."/>
            <person name="Yasuda T."/>
            <person name="Iwayanagi T."/>
            <person name="Wagatsuma M."/>
            <person name="Shiratori A."/>
            <person name="Sudo H."/>
            <person name="Hosoiri T."/>
            <person name="Kaku Y."/>
            <person name="Kodaira H."/>
            <person name="Kondo H."/>
            <person name="Sugawara M."/>
            <person name="Takahashi M."/>
            <person name="Kanda K."/>
            <person name="Yokoi T."/>
            <person name="Furuya T."/>
            <person name="Kikkawa E."/>
            <person name="Omura Y."/>
            <person name="Abe K."/>
            <person name="Kamihara K."/>
            <person name="Katsuta N."/>
            <person name="Sato K."/>
            <person name="Tanikawa M."/>
            <person name="Yamazaki M."/>
            <person name="Ninomiya K."/>
            <person name="Ishibashi T."/>
            <person name="Yamashita H."/>
            <person name="Murakawa K."/>
            <person name="Fujimori K."/>
            <person name="Tanai H."/>
            <person name="Kimata M."/>
            <person name="Watanabe M."/>
            <person name="Hiraoka S."/>
            <person name="Chiba Y."/>
            <person name="Ishida S."/>
            <person name="Ono Y."/>
            <person name="Takiguchi S."/>
            <person name="Watanabe S."/>
            <person name="Yosida M."/>
            <person name="Hotuta T."/>
            <person name="Kusano J."/>
            <person name="Kanehori K."/>
            <person name="Takahashi-Fujii A."/>
            <person name="Hara H."/>
            <person name="Tanase T.-O."/>
            <person name="Nomura Y."/>
            <person name="Togiya S."/>
            <person name="Komai F."/>
            <person name="Hara R."/>
            <person name="Takeuchi K."/>
            <person name="Arita M."/>
            <person name="Imose N."/>
            <person name="Musashino K."/>
            <person name="Yuuki H."/>
            <person name="Oshima A."/>
            <person name="Sasaki N."/>
            <person name="Aotsuka S."/>
            <person name="Yoshikawa Y."/>
            <person name="Matsunawa H."/>
            <person name="Ichihara T."/>
            <person name="Shiohata N."/>
            <person name="Sano S."/>
            <person name="Moriya S."/>
            <person name="Momiyama H."/>
            <person name="Satoh N."/>
            <person name="Takami S."/>
            <person name="Terashima Y."/>
            <person name="Suzuki O."/>
            <person name="Nakagawa S."/>
            <person name="Senoh A."/>
            <person name="Mizoguchi H."/>
            <person name="Goto Y."/>
            <person name="Shimizu F."/>
            <person name="Wakebe H."/>
            <person name="Hishigaki H."/>
            <person name="Watanabe T."/>
            <person name="Sugiyama A."/>
            <person name="Takemoto M."/>
            <person name="Kawakami B."/>
            <person name="Yamazaki M."/>
            <person name="Watanabe K."/>
            <person name="Kumagai A."/>
            <person name="Itakura S."/>
            <person name="Fukuzumi Y."/>
            <person name="Fujimori Y."/>
            <person name="Komiyama M."/>
            <person name="Tashiro H."/>
            <person name="Tanigami A."/>
            <person name="Fujiwara T."/>
            <person name="Ono T."/>
            <person name="Yamada K."/>
            <person name="Fujii Y."/>
            <person name="Ozaki K."/>
            <person name="Hirao M."/>
            <person name="Ohmori Y."/>
            <person name="Kawabata A."/>
            <person name="Hikiji T."/>
            <person name="Kobatake N."/>
            <person name="Inagaki H."/>
            <person name="Ikema Y."/>
            <person name="Okamoto S."/>
            <person name="Okitani R."/>
            <person name="Kawakami T."/>
            <person name="Noguchi S."/>
            <person name="Itoh T."/>
            <person name="Shigeta K."/>
            <person name="Senba T."/>
            <person name="Matsumura K."/>
            <person name="Nakajima Y."/>
            <person name="Mizuno T."/>
            <person name="Morinaga M."/>
            <person name="Sasaki M."/>
            <person name="Togashi T."/>
            <person name="Oyama M."/>
            <person name="Hata H."/>
            <person name="Watanabe M."/>
            <person name="Komatsu T."/>
            <person name="Mizushima-Sugano J."/>
            <person name="Satoh T."/>
            <person name="Shirai Y."/>
            <person name="Takahashi Y."/>
            <person name="Nakagawa K."/>
            <person name="Okumura K."/>
            <person name="Nagase T."/>
            <person name="Nomura N."/>
            <person name="Kikuchi H."/>
            <person name="Masuho Y."/>
            <person name="Yamashita R."/>
            <person name="Nakai K."/>
            <person name="Yada T."/>
            <person name="Nakamura Y."/>
            <person name="Ohara O."/>
            <person name="Isogai T."/>
            <person name="Sugano S."/>
        </authorList>
    </citation>
    <scope>NUCLEOTIDE SEQUENCE [LARGE SCALE MRNA] (ISOFORMS 1 AND 5)</scope>
    <scope>NUCLEOTIDE SEQUENCE [LARGE SCALE MRNA] OF 418-941 (ISOFORM 2)</scope>
    <scope>VARIANTS MET-490 AND MET-885</scope>
    <source>
        <tissue>Testis</tissue>
    </source>
</reference>
<reference key="3">
    <citation type="journal article" date="2003" name="Nature">
        <title>The DNA sequence of human chromosome 7.</title>
        <authorList>
            <person name="Hillier L.W."/>
            <person name="Fulton R.S."/>
            <person name="Fulton L.A."/>
            <person name="Graves T.A."/>
            <person name="Pepin K.H."/>
            <person name="Wagner-McPherson C."/>
            <person name="Layman D."/>
            <person name="Maas J."/>
            <person name="Jaeger S."/>
            <person name="Walker R."/>
            <person name="Wylie K."/>
            <person name="Sekhon M."/>
            <person name="Becker M.C."/>
            <person name="O'Laughlin M.D."/>
            <person name="Schaller M.E."/>
            <person name="Fewell G.A."/>
            <person name="Delehaunty K.D."/>
            <person name="Miner T.L."/>
            <person name="Nash W.E."/>
            <person name="Cordes M."/>
            <person name="Du H."/>
            <person name="Sun H."/>
            <person name="Edwards J."/>
            <person name="Bradshaw-Cordum H."/>
            <person name="Ali J."/>
            <person name="Andrews S."/>
            <person name="Isak A."/>
            <person name="Vanbrunt A."/>
            <person name="Nguyen C."/>
            <person name="Du F."/>
            <person name="Lamar B."/>
            <person name="Courtney L."/>
            <person name="Kalicki J."/>
            <person name="Ozersky P."/>
            <person name="Bielicki L."/>
            <person name="Scott K."/>
            <person name="Holmes A."/>
            <person name="Harkins R."/>
            <person name="Harris A."/>
            <person name="Strong C.M."/>
            <person name="Hou S."/>
            <person name="Tomlinson C."/>
            <person name="Dauphin-Kohlberg S."/>
            <person name="Kozlowicz-Reilly A."/>
            <person name="Leonard S."/>
            <person name="Rohlfing T."/>
            <person name="Rock S.M."/>
            <person name="Tin-Wollam A.-M."/>
            <person name="Abbott A."/>
            <person name="Minx P."/>
            <person name="Maupin R."/>
            <person name="Strowmatt C."/>
            <person name="Latreille P."/>
            <person name="Miller N."/>
            <person name="Johnson D."/>
            <person name="Murray J."/>
            <person name="Woessner J.P."/>
            <person name="Wendl M.C."/>
            <person name="Yang S.-P."/>
            <person name="Schultz B.R."/>
            <person name="Wallis J.W."/>
            <person name="Spieth J."/>
            <person name="Bieri T.A."/>
            <person name="Nelson J.O."/>
            <person name="Berkowicz N."/>
            <person name="Wohldmann P.E."/>
            <person name="Cook L.L."/>
            <person name="Hickenbotham M.T."/>
            <person name="Eldred J."/>
            <person name="Williams D."/>
            <person name="Bedell J.A."/>
            <person name="Mardis E.R."/>
            <person name="Clifton S.W."/>
            <person name="Chissoe S.L."/>
            <person name="Marra M.A."/>
            <person name="Raymond C."/>
            <person name="Haugen E."/>
            <person name="Gillett W."/>
            <person name="Zhou Y."/>
            <person name="James R."/>
            <person name="Phelps K."/>
            <person name="Iadanoto S."/>
            <person name="Bubb K."/>
            <person name="Simms E."/>
            <person name="Levy R."/>
            <person name="Clendenning J."/>
            <person name="Kaul R."/>
            <person name="Kent W.J."/>
            <person name="Furey T.S."/>
            <person name="Baertsch R.A."/>
            <person name="Brent M.R."/>
            <person name="Keibler E."/>
            <person name="Flicek P."/>
            <person name="Bork P."/>
            <person name="Suyama M."/>
            <person name="Bailey J.A."/>
            <person name="Portnoy M.E."/>
            <person name="Torrents D."/>
            <person name="Chinwalla A.T."/>
            <person name="Gish W.R."/>
            <person name="Eddy S.R."/>
            <person name="McPherson J.D."/>
            <person name="Olson M.V."/>
            <person name="Eichler E.E."/>
            <person name="Green E.D."/>
            <person name="Waterston R.H."/>
            <person name="Wilson R.K."/>
        </authorList>
    </citation>
    <scope>NUCLEOTIDE SEQUENCE [LARGE SCALE GENOMIC DNA]</scope>
</reference>
<reference key="4">
    <citation type="journal article" date="2004" name="Genome Res.">
        <title>The status, quality, and expansion of the NIH full-length cDNA project: the Mammalian Gene Collection (MGC).</title>
        <authorList>
            <consortium name="The MGC Project Team"/>
        </authorList>
    </citation>
    <scope>NUCLEOTIDE SEQUENCE [LARGE SCALE MRNA] (ISOFORMS 1 AND 3)</scope>
    <scope>VARIANTS MET-490 AND MET-885</scope>
    <source>
        <tissue>Brain</tissue>
    </source>
</reference>
<reference key="5">
    <citation type="journal article" date="2018" name="Am. J. Hum. Genet.">
        <title>Absence of CFAP69 Causes Male Infertility due to Multiple Morphological Abnormalities of the Flagella in Human and Mouse.</title>
        <authorList>
            <person name="Dong F.N."/>
            <person name="Amiri-Yekta A."/>
            <person name="Martinez G."/>
            <person name="Saut A."/>
            <person name="Tek J."/>
            <person name="Stouvenel L."/>
            <person name="Lores P."/>
            <person name="Karaouzene T."/>
            <person name="Thierry-Mieg N."/>
            <person name="Satre V."/>
            <person name="Brouillet S."/>
            <person name="Daneshipour A."/>
            <person name="Hosseini S.H."/>
            <person name="Bonhivers M."/>
            <person name="Gourabi H."/>
            <person name="Dulioust E."/>
            <person name="Arnoult C."/>
            <person name="Toure A."/>
            <person name="Ray P.F."/>
            <person name="Zhao H."/>
            <person name="Coutton C."/>
        </authorList>
    </citation>
    <scope>FUNCTION</scope>
    <scope>SUBCELLULAR LOCATION</scope>
    <scope>TISSUE SPECIFICITY</scope>
    <scope>INVOLVEMENT IN SPGF24</scope>
    <scope>VARIANT SPGF24 255-GLN--THR-941 DEL</scope>
</reference>
<protein>
    <recommendedName>
        <fullName evidence="10">Cilia- and flagella-associated protein 69</fullName>
    </recommendedName>
</protein>
<organism>
    <name type="scientific">Homo sapiens</name>
    <name type="common">Human</name>
    <dbReference type="NCBI Taxonomy" id="9606"/>
    <lineage>
        <taxon>Eukaryota</taxon>
        <taxon>Metazoa</taxon>
        <taxon>Chordata</taxon>
        <taxon>Craniata</taxon>
        <taxon>Vertebrata</taxon>
        <taxon>Euteleostomi</taxon>
        <taxon>Mammalia</taxon>
        <taxon>Eutheria</taxon>
        <taxon>Euarchontoglires</taxon>
        <taxon>Primates</taxon>
        <taxon>Haplorrhini</taxon>
        <taxon>Catarrhini</taxon>
        <taxon>Hominidae</taxon>
        <taxon>Homo</taxon>
    </lineage>
</organism>
<sequence>MWTEEAGATAEAQESGIRNKSSSSSQIPVVGVVTEDDEAQDVFKPMDLNRVIKLLEETDKDGLEEKQLKFVKKLVQCYQNGLPLRDLAQIFKILNLCSGKIKNQPRFIESAYDIIKLCGLPFLKKKVSDEITYAEDTANSIALLGDLMKIPSSELRIQICKCIVDFYHAEPPKKHIPGYQQASSSYKIQMAEVGGLAKTMVQSMTLLENQLVEKLWVLKVLQHLSTSEVNCTIMMKAQAASGICTHLNDPDPSGQLLFRSSEILWNLLEKSSKEEVIQQLSNLECLLALKEVFKNLFMRGFSHYDRQLRNDILVITTIIAQNPEAPMIECGFTKDLILFATFNEVKSQNLLVKGLKLSNSYEDFELKKLLFNVIVILCKDLPTVQLLIDGKVILALFTYVKKPEKQKIIDWSAAQHEELQLHAIATLSSVAPLLIEEYMSCQGNARVLAFLEWCESEDPFFSHGNSFHGTGGRGNKFAQMRYSLRLLRAVVYLEDETVNKDLCEKGTIQQMIGIFKNIISKPNEKEEAIVLEIQSDILLILSGLCENHIQRKEIFGTEGVDIVLHVMKTDPRKLQSGLGYNVLLFSTLDSIWCCILGCYPSEDYFLEKEGIFLLLDLLALNQKKFCNLILGIMVEFCDNPKTAAHVNAWQGKKDQTAASLLIKLWRKEEKELGVKRDKNGKIIDTKKPLFTSFQEEQKIIPLPANCPSIAVMDVSENIRAKIYAILGKLDFENLPGLSAEDFVTLCIIHRYLDFKIGEIWNEIYEEIKLEKLRPVTTDKKALEAITTASENIGKMVASLQSDIIESQACQDMQNEQKVYAKIQATHKQRELANKSWEDFLARTSNAKTLKKAKSLQEKAIEASRYHKRPQNAIFHQTHIKGLNTTVPSGGVVTVESTPARLVGGPLVDTDIALKKLPIRGGALQRVKAVKIVDAPKKSIPT</sequence>
<dbReference type="EMBL" id="AY349356">
    <property type="protein sequence ID" value="AAQ56720.1"/>
    <property type="molecule type" value="mRNA"/>
</dbReference>
<dbReference type="EMBL" id="AK024715">
    <property type="protein sequence ID" value="BAB14972.1"/>
    <property type="status" value="ALT_INIT"/>
    <property type="molecule type" value="mRNA"/>
</dbReference>
<dbReference type="EMBL" id="AK302636">
    <property type="protein sequence ID" value="BAG63878.1"/>
    <property type="molecule type" value="mRNA"/>
</dbReference>
<dbReference type="EMBL" id="AK303034">
    <property type="protein sequence ID" value="BAG64159.1"/>
    <property type="molecule type" value="mRNA"/>
</dbReference>
<dbReference type="EMBL" id="AC002064">
    <property type="status" value="NOT_ANNOTATED_CDS"/>
    <property type="molecule type" value="Genomic_DNA"/>
</dbReference>
<dbReference type="EMBL" id="BC036351">
    <property type="protein sequence ID" value="AAH36351.1"/>
    <property type="molecule type" value="mRNA"/>
</dbReference>
<dbReference type="EMBL" id="BC132771">
    <property type="protein sequence ID" value="AAI32772.1"/>
    <property type="molecule type" value="mRNA"/>
</dbReference>
<dbReference type="EMBL" id="BC140742">
    <property type="protein sequence ID" value="AAI40743.1"/>
    <property type="molecule type" value="mRNA"/>
</dbReference>
<dbReference type="EMBL" id="BC141834">
    <property type="protein sequence ID" value="AAI41835.1"/>
    <property type="molecule type" value="mRNA"/>
</dbReference>
<dbReference type="EMBL" id="BC142655">
    <property type="protein sequence ID" value="AAI42656.1"/>
    <property type="molecule type" value="mRNA"/>
</dbReference>
<dbReference type="CCDS" id="CCDS43613.2">
    <molecule id="A5D8W1-1"/>
</dbReference>
<dbReference type="CCDS" id="CCDS55122.1">
    <molecule id="A5D8W1-5"/>
</dbReference>
<dbReference type="RefSeq" id="NP_001034795.2">
    <molecule id="A5D8W1-1"/>
    <property type="nucleotide sequence ID" value="NM_001039706.3"/>
</dbReference>
<dbReference type="RefSeq" id="NP_001153610.1">
    <molecule id="A5D8W1-5"/>
    <property type="nucleotide sequence ID" value="NM_001160138.2"/>
</dbReference>
<dbReference type="RefSeq" id="XP_016868116.1">
    <property type="nucleotide sequence ID" value="XM_017012627.1"/>
</dbReference>
<dbReference type="SMR" id="A5D8W1"/>
<dbReference type="BioGRID" id="122937">
    <property type="interactions" value="11"/>
</dbReference>
<dbReference type="FunCoup" id="A5D8W1">
    <property type="interactions" value="182"/>
</dbReference>
<dbReference type="IntAct" id="A5D8W1">
    <property type="interactions" value="6"/>
</dbReference>
<dbReference type="STRING" id="9606.ENSP00000373948"/>
<dbReference type="iPTMnet" id="A5D8W1"/>
<dbReference type="PhosphoSitePlus" id="A5D8W1"/>
<dbReference type="BioMuta" id="CFAP69"/>
<dbReference type="MassIVE" id="A5D8W1"/>
<dbReference type="PaxDb" id="9606-ENSP00000373948"/>
<dbReference type="PeptideAtlas" id="A5D8W1"/>
<dbReference type="ProteomicsDB" id="714">
    <molecule id="A5D8W1-1"/>
</dbReference>
<dbReference type="ProteomicsDB" id="715">
    <molecule id="A5D8W1-2"/>
</dbReference>
<dbReference type="ProteomicsDB" id="716">
    <molecule id="A5D8W1-3"/>
</dbReference>
<dbReference type="ProteomicsDB" id="717">
    <molecule id="A5D8W1-4"/>
</dbReference>
<dbReference type="ProteomicsDB" id="718">
    <molecule id="A5D8W1-5"/>
</dbReference>
<dbReference type="Antibodypedia" id="67513">
    <property type="antibodies" value="62 antibodies from 16 providers"/>
</dbReference>
<dbReference type="DNASU" id="79846"/>
<dbReference type="Ensembl" id="ENST00000389297.8">
    <molecule id="A5D8W1-1"/>
    <property type="protein sequence ID" value="ENSP00000373948.4"/>
    <property type="gene ID" value="ENSG00000105792.19"/>
</dbReference>
<dbReference type="Ensembl" id="ENST00000451029.5">
    <molecule id="A5D8W1-3"/>
    <property type="protein sequence ID" value="ENSP00000411234.1"/>
    <property type="gene ID" value="ENSG00000105792.19"/>
</dbReference>
<dbReference type="Ensembl" id="ENST00000497910.5">
    <molecule id="A5D8W1-5"/>
    <property type="protein sequence ID" value="ENSP00000419549.1"/>
    <property type="gene ID" value="ENSG00000105792.19"/>
</dbReference>
<dbReference type="GeneID" id="79846"/>
<dbReference type="KEGG" id="hsa:79846"/>
<dbReference type="MANE-Select" id="ENST00000389297.8">
    <property type="protein sequence ID" value="ENSP00000373948.4"/>
    <property type="RefSeq nucleotide sequence ID" value="NM_001039706.3"/>
    <property type="RefSeq protein sequence ID" value="NP_001034795.2"/>
</dbReference>
<dbReference type="UCSC" id="uc010lep.3">
    <molecule id="A5D8W1-1"/>
    <property type="organism name" value="human"/>
</dbReference>
<dbReference type="AGR" id="HGNC:26107"/>
<dbReference type="CTD" id="79846"/>
<dbReference type="DisGeNET" id="79846"/>
<dbReference type="GeneCards" id="CFAP69"/>
<dbReference type="HGNC" id="HGNC:26107">
    <property type="gene designation" value="CFAP69"/>
</dbReference>
<dbReference type="HPA" id="ENSG00000105792">
    <property type="expression patterns" value="Tissue enhanced (choroid)"/>
</dbReference>
<dbReference type="MalaCards" id="CFAP69"/>
<dbReference type="MIM" id="617959">
    <property type="type" value="phenotype"/>
</dbReference>
<dbReference type="neXtProt" id="NX_A5D8W1"/>
<dbReference type="OpenTargets" id="ENSG00000105792"/>
<dbReference type="Orphanet" id="276234">
    <property type="disease" value="Non-syndromic male infertility due to sperm motility disorder"/>
</dbReference>
<dbReference type="PharmGKB" id="PA162380735"/>
<dbReference type="VEuPathDB" id="HostDB:ENSG00000105792"/>
<dbReference type="eggNOG" id="ENOG502QV2V">
    <property type="taxonomic scope" value="Eukaryota"/>
</dbReference>
<dbReference type="GeneTree" id="ENSGT00390000014274"/>
<dbReference type="HOGENOM" id="CLU_1209429_0_0_1"/>
<dbReference type="InParanoid" id="A5D8W1"/>
<dbReference type="OMA" id="TINSDLC"/>
<dbReference type="OrthoDB" id="191673at2759"/>
<dbReference type="PAN-GO" id="A5D8W1">
    <property type="GO annotations" value="5 GO annotations based on evolutionary models"/>
</dbReference>
<dbReference type="PhylomeDB" id="A5D8W1"/>
<dbReference type="TreeFam" id="TF328355"/>
<dbReference type="PathwayCommons" id="A5D8W1"/>
<dbReference type="SignaLink" id="A5D8W1"/>
<dbReference type="BioGRID-ORCS" id="79846">
    <property type="hits" value="12 hits in 1146 CRISPR screens"/>
</dbReference>
<dbReference type="ChiTaRS" id="CFAP69">
    <property type="organism name" value="human"/>
</dbReference>
<dbReference type="GenomeRNAi" id="79846"/>
<dbReference type="Pharos" id="A5D8W1">
    <property type="development level" value="Tbio"/>
</dbReference>
<dbReference type="PRO" id="PR:A5D8W1"/>
<dbReference type="Proteomes" id="UP000005640">
    <property type="component" value="Chromosome 7"/>
</dbReference>
<dbReference type="RNAct" id="A5D8W1">
    <property type="molecule type" value="protein"/>
</dbReference>
<dbReference type="Bgee" id="ENSG00000105792">
    <property type="expression patterns" value="Expressed in right uterine tube and 153 other cell types or tissues"/>
</dbReference>
<dbReference type="ExpressionAtlas" id="A5D8W1">
    <property type="expression patterns" value="baseline and differential"/>
</dbReference>
<dbReference type="GO" id="GO:0005737">
    <property type="term" value="C:cytoplasm"/>
    <property type="evidence" value="ECO:0000314"/>
    <property type="project" value="UniProtKB"/>
</dbReference>
<dbReference type="GO" id="GO:0097730">
    <property type="term" value="C:non-motile cilium"/>
    <property type="evidence" value="ECO:0000250"/>
    <property type="project" value="UniProtKB"/>
</dbReference>
<dbReference type="GO" id="GO:0097225">
    <property type="term" value="C:sperm midpiece"/>
    <property type="evidence" value="ECO:0000314"/>
    <property type="project" value="UniProtKB"/>
</dbReference>
<dbReference type="GO" id="GO:0030317">
    <property type="term" value="P:flagellated sperm motility"/>
    <property type="evidence" value="ECO:0000315"/>
    <property type="project" value="MGI"/>
</dbReference>
<dbReference type="GO" id="GO:0042048">
    <property type="term" value="P:olfactory behavior"/>
    <property type="evidence" value="ECO:0000250"/>
    <property type="project" value="UniProtKB"/>
</dbReference>
<dbReference type="GO" id="GO:1905516">
    <property type="term" value="P:positive regulation of fertilization"/>
    <property type="evidence" value="ECO:0000250"/>
    <property type="project" value="UniProtKB"/>
</dbReference>
<dbReference type="GO" id="GO:1902093">
    <property type="term" value="P:positive regulation of flagellated sperm motility"/>
    <property type="evidence" value="ECO:0000250"/>
    <property type="project" value="UniProtKB"/>
</dbReference>
<dbReference type="GO" id="GO:1990834">
    <property type="term" value="P:response to odorant"/>
    <property type="evidence" value="ECO:0000250"/>
    <property type="project" value="UniProtKB"/>
</dbReference>
<dbReference type="GO" id="GO:0007608">
    <property type="term" value="P:sensory perception of smell"/>
    <property type="evidence" value="ECO:0007669"/>
    <property type="project" value="UniProtKB-KW"/>
</dbReference>
<dbReference type="GO" id="GO:0007288">
    <property type="term" value="P:sperm axoneme assembly"/>
    <property type="evidence" value="ECO:0000315"/>
    <property type="project" value="MGI"/>
</dbReference>
<dbReference type="FunFam" id="1.25.10.10:FF:001650">
    <property type="entry name" value="Cilia and flagella associated protein 69"/>
    <property type="match status" value="1"/>
</dbReference>
<dbReference type="Gene3D" id="1.25.10.10">
    <property type="entry name" value="Leucine-rich Repeat Variant"/>
    <property type="match status" value="1"/>
</dbReference>
<dbReference type="InterPro" id="IPR011989">
    <property type="entry name" value="ARM-like"/>
</dbReference>
<dbReference type="InterPro" id="IPR016024">
    <property type="entry name" value="ARM-type_fold"/>
</dbReference>
<dbReference type="InterPro" id="IPR048732">
    <property type="entry name" value="CFA69"/>
</dbReference>
<dbReference type="InterPro" id="IPR048733">
    <property type="entry name" value="CFA69_ARM_dom"/>
</dbReference>
<dbReference type="PANTHER" id="PTHR14716">
    <property type="entry name" value="CILIA- AND FLAGELLA-ASSOCIATED PROTEIN 69"/>
    <property type="match status" value="1"/>
</dbReference>
<dbReference type="PANTHER" id="PTHR14716:SF0">
    <property type="entry name" value="CILIA- AND FLAGELLA-ASSOCIATED PROTEIN 69"/>
    <property type="match status" value="1"/>
</dbReference>
<dbReference type="Pfam" id="PF21049">
    <property type="entry name" value="CFA69_ARM_rpt"/>
    <property type="match status" value="1"/>
</dbReference>
<dbReference type="SUPFAM" id="SSF48371">
    <property type="entry name" value="ARM repeat"/>
    <property type="match status" value="2"/>
</dbReference>